<name>AMAN2_AMAEX</name>
<comment type="function">
    <text evidence="5">Cyclic nonapeptide that belongs to the MSDIN-like toxin family responsible for a large number of food poisoning cases and deaths (PubMed:24050899).</text>
</comment>
<comment type="tissue specificity">
    <text evidence="2">Expressed in basidiocarps (PubMed:24050899).</text>
</comment>
<comment type="PTM">
    <text evidence="1">Processed by the macrocyclase-peptidase enzyme POPB to yield a toxic cyclic nonapeptide (By similarity). POPB first removes 10 residues from the N-terminus (By similarity). Conformational trapping of the remaining peptide forces the enzyme to release this intermediate rather than proceed to macrocyclization (By similarity). The enzyme rebinds the remaining peptide in a different conformation and catalyzes macrocyclization of the N-terminal 9 residues (By similarity).</text>
</comment>
<comment type="biotechnology">
    <text evidence="6">Amanexitides have a structure closely related to antamanide, a cyclic decapeptide with antidote activity against amatoxins and phallotoxins, and might therefore exhibit the same activity (Ref.2).</text>
</comment>
<comment type="similarity">
    <text evidence="4">Belongs to the MSDIN fungal toxin family.</text>
</comment>
<evidence type="ECO:0000250" key="1">
    <source>
        <dbReference type="UniProtKB" id="A0A067SLB9"/>
    </source>
</evidence>
<evidence type="ECO:0000269" key="2">
    <source>
    </source>
</evidence>
<evidence type="ECO:0000303" key="3">
    <source>
    </source>
</evidence>
<evidence type="ECO:0000305" key="4"/>
<evidence type="ECO:0000305" key="5">
    <source>
    </source>
</evidence>
<evidence type="ECO:0000305" key="6">
    <source ref="2"/>
</evidence>
<protein>
    <recommendedName>
        <fullName evidence="3">Amanexitide proprotein 2</fullName>
    </recommendedName>
    <component>
        <recommendedName>
            <fullName evidence="3">Amanexitide 2</fullName>
        </recommendedName>
    </component>
</protein>
<sequence length="36" mass="3987">MSDINATRLPVFSLPVFFPFVSDDIQAVLTRGESLC</sequence>
<organism>
    <name type="scientific">Amanita exitialis</name>
    <name type="common">Guangzhou destroying angel</name>
    <dbReference type="NCBI Taxonomy" id="262245"/>
    <lineage>
        <taxon>Eukaryota</taxon>
        <taxon>Fungi</taxon>
        <taxon>Dikarya</taxon>
        <taxon>Basidiomycota</taxon>
        <taxon>Agaricomycotina</taxon>
        <taxon>Agaricomycetes</taxon>
        <taxon>Agaricomycetidae</taxon>
        <taxon>Agaricales</taxon>
        <taxon>Pluteineae</taxon>
        <taxon>Amanitaceae</taxon>
        <taxon>Amanita</taxon>
    </lineage>
</organism>
<accession>U5L3K1</accession>
<keyword id="KW-0800">Toxin</keyword>
<proteinExistence type="evidence at transcript level"/>
<dbReference type="EMBL" id="KF387494">
    <property type="protein sequence ID" value="AGW83718.1"/>
    <property type="molecule type" value="mRNA"/>
</dbReference>
<dbReference type="GO" id="GO:0090729">
    <property type="term" value="F:toxin activity"/>
    <property type="evidence" value="ECO:0007669"/>
    <property type="project" value="UniProtKB-KW"/>
</dbReference>
<dbReference type="InterPro" id="IPR027582">
    <property type="entry name" value="Amanitin/phalloidin"/>
</dbReference>
<dbReference type="NCBIfam" id="TIGR04309">
    <property type="entry name" value="amanitin"/>
    <property type="match status" value="1"/>
</dbReference>
<reference key="1">
    <citation type="journal article" date="2013" name="Gene">
        <title>Illumina-based de novo transcriptome sequencing and analysis of Amanita exitialis basidiocarps.</title>
        <authorList>
            <person name="Li P."/>
            <person name="Deng W.Q."/>
            <person name="Li T.H."/>
            <person name="Song B."/>
            <person name="Shen Y.H."/>
        </authorList>
    </citation>
    <scope>NUCLEOTIDE SEQUENCE [MRNA]</scope>
    <scope>FUNCTION</scope>
    <scope>TISSUE SPECIFICITY</scope>
</reference>
<reference key="2">
    <citation type="journal article" date="2011" name="Nat. Prod. Bioprospect.">
        <title>Cyclopeptides from Amanita exitialis.</title>
        <authorList>
            <person name="Xue J.H."/>
            <person name="Wu P."/>
            <person name="Chi Y.L."/>
            <person name="Xu L.X."/>
            <person name="Wei X.Y."/>
        </authorList>
    </citation>
    <scope>BIOTECHNOLOGY</scope>
</reference>
<feature type="propeptide" id="PRO_0000443749" evidence="5">
    <location>
        <begin position="1"/>
        <end position="10"/>
    </location>
</feature>
<feature type="peptide" id="PRO_0000443750" description="Amanexitide 2" evidence="5">
    <location>
        <begin position="11"/>
        <end position="19"/>
    </location>
</feature>
<feature type="propeptide" id="PRO_0000443751" evidence="5">
    <location>
        <begin position="20"/>
        <end position="36"/>
    </location>
</feature>
<feature type="cross-link" description="Cyclopeptide (Val-Pro)" evidence="5">
    <location>
        <begin position="11"/>
        <end position="19"/>
    </location>
</feature>